<evidence type="ECO:0000255" key="1">
    <source>
        <dbReference type="HAMAP-Rule" id="MF_00313"/>
    </source>
</evidence>
<sequence length="302" mass="32674">MQDLLNEILDEVRPLLGQGKVADYIPALGGVRPDQLGIAVYGNDGQVFSAGDAETQFSIQSISKVFSLVQAIGHSGEDIWQRLGHEPSGQPFNSLVQLEFERGRPRNPFINAGALVICDINQARFAAPSLSMRDFVRRLCGNRAITSDSKVAESEYQHRSRNAAAAYLMKSFDNFHGDVEDVLRSYFHHCALSMNCIDLAKAFGFLANQGFCTHSGEQILTARQATQVNSIMATSGLYDEAGNFAYRVGLPGKSGVGGGIVAIVPERASVCVWSPELNAAGNSLVGMAALEKLSARIDWSVF</sequence>
<protein>
    <recommendedName>
        <fullName evidence="1">Glutaminase</fullName>
        <ecNumber evidence="1">3.5.1.2</ecNumber>
    </recommendedName>
</protein>
<feature type="chain" id="PRO_1000048340" description="Glutaminase">
    <location>
        <begin position="1"/>
        <end position="302"/>
    </location>
</feature>
<feature type="binding site" evidence="1">
    <location>
        <position position="61"/>
    </location>
    <ligand>
        <name>substrate</name>
    </ligand>
</feature>
<feature type="binding site" evidence="1">
    <location>
        <position position="111"/>
    </location>
    <ligand>
        <name>substrate</name>
    </ligand>
</feature>
<feature type="binding site" evidence="1">
    <location>
        <position position="155"/>
    </location>
    <ligand>
        <name>substrate</name>
    </ligand>
</feature>
<feature type="binding site" evidence="1">
    <location>
        <position position="162"/>
    </location>
    <ligand>
        <name>substrate</name>
    </ligand>
</feature>
<feature type="binding site" evidence="1">
    <location>
        <position position="186"/>
    </location>
    <ligand>
        <name>substrate</name>
    </ligand>
</feature>
<feature type="binding site" evidence="1">
    <location>
        <position position="238"/>
    </location>
    <ligand>
        <name>substrate</name>
    </ligand>
</feature>
<feature type="binding site" evidence="1">
    <location>
        <position position="256"/>
    </location>
    <ligand>
        <name>substrate</name>
    </ligand>
</feature>
<proteinExistence type="inferred from homology"/>
<gene>
    <name evidence="1" type="primary">glsA</name>
    <name type="ordered locus">PSPPH_2883</name>
</gene>
<reference key="1">
    <citation type="journal article" date="2005" name="J. Bacteriol.">
        <title>Whole-genome sequence analysis of Pseudomonas syringae pv. phaseolicola 1448A reveals divergence among pathovars in genes involved in virulence and transposition.</title>
        <authorList>
            <person name="Joardar V."/>
            <person name="Lindeberg M."/>
            <person name="Jackson R.W."/>
            <person name="Selengut J."/>
            <person name="Dodson R."/>
            <person name="Brinkac L.M."/>
            <person name="Daugherty S.C."/>
            <person name="DeBoy R.T."/>
            <person name="Durkin A.S."/>
            <person name="Gwinn Giglio M."/>
            <person name="Madupu R."/>
            <person name="Nelson W.C."/>
            <person name="Rosovitz M.J."/>
            <person name="Sullivan S.A."/>
            <person name="Crabtree J."/>
            <person name="Creasy T."/>
            <person name="Davidsen T.M."/>
            <person name="Haft D.H."/>
            <person name="Zafar N."/>
            <person name="Zhou L."/>
            <person name="Halpin R."/>
            <person name="Holley T."/>
            <person name="Khouri H.M."/>
            <person name="Feldblyum T.V."/>
            <person name="White O."/>
            <person name="Fraser C.M."/>
            <person name="Chatterjee A.K."/>
            <person name="Cartinhour S."/>
            <person name="Schneider D."/>
            <person name="Mansfield J.W."/>
            <person name="Collmer A."/>
            <person name="Buell R."/>
        </authorList>
    </citation>
    <scope>NUCLEOTIDE SEQUENCE [LARGE SCALE GENOMIC DNA]</scope>
    <source>
        <strain>1448A / Race 6</strain>
    </source>
</reference>
<accession>Q48HR7</accession>
<comment type="catalytic activity">
    <reaction evidence="1">
        <text>L-glutamine + H2O = L-glutamate + NH4(+)</text>
        <dbReference type="Rhea" id="RHEA:15889"/>
        <dbReference type="ChEBI" id="CHEBI:15377"/>
        <dbReference type="ChEBI" id="CHEBI:28938"/>
        <dbReference type="ChEBI" id="CHEBI:29985"/>
        <dbReference type="ChEBI" id="CHEBI:58359"/>
        <dbReference type="EC" id="3.5.1.2"/>
    </reaction>
</comment>
<comment type="subunit">
    <text evidence="1">Homotetramer.</text>
</comment>
<comment type="similarity">
    <text evidence="1">Belongs to the glutaminase family.</text>
</comment>
<keyword id="KW-0378">Hydrolase</keyword>
<name>GLSA_PSE14</name>
<dbReference type="EC" id="3.5.1.2" evidence="1"/>
<dbReference type="EMBL" id="CP000058">
    <property type="protein sequence ID" value="AAZ37654.1"/>
    <property type="molecule type" value="Genomic_DNA"/>
</dbReference>
<dbReference type="SMR" id="Q48HR7"/>
<dbReference type="KEGG" id="psp:PSPPH_2883"/>
<dbReference type="eggNOG" id="COG2066">
    <property type="taxonomic scope" value="Bacteria"/>
</dbReference>
<dbReference type="HOGENOM" id="CLU_027932_1_1_6"/>
<dbReference type="Proteomes" id="UP000000551">
    <property type="component" value="Chromosome"/>
</dbReference>
<dbReference type="GO" id="GO:0004359">
    <property type="term" value="F:glutaminase activity"/>
    <property type="evidence" value="ECO:0007669"/>
    <property type="project" value="UniProtKB-UniRule"/>
</dbReference>
<dbReference type="GO" id="GO:0006537">
    <property type="term" value="P:glutamate biosynthetic process"/>
    <property type="evidence" value="ECO:0007669"/>
    <property type="project" value="TreeGrafter"/>
</dbReference>
<dbReference type="GO" id="GO:0006543">
    <property type="term" value="P:glutamine catabolic process"/>
    <property type="evidence" value="ECO:0007669"/>
    <property type="project" value="TreeGrafter"/>
</dbReference>
<dbReference type="FunFam" id="3.40.710.10:FF:000005">
    <property type="entry name" value="Glutaminase"/>
    <property type="match status" value="1"/>
</dbReference>
<dbReference type="Gene3D" id="3.40.710.10">
    <property type="entry name" value="DD-peptidase/beta-lactamase superfamily"/>
    <property type="match status" value="1"/>
</dbReference>
<dbReference type="HAMAP" id="MF_00313">
    <property type="entry name" value="Glutaminase"/>
    <property type="match status" value="1"/>
</dbReference>
<dbReference type="InterPro" id="IPR012338">
    <property type="entry name" value="Beta-lactam/transpept-like"/>
</dbReference>
<dbReference type="InterPro" id="IPR015868">
    <property type="entry name" value="Glutaminase"/>
</dbReference>
<dbReference type="NCBIfam" id="TIGR03814">
    <property type="entry name" value="Gln_ase"/>
    <property type="match status" value="1"/>
</dbReference>
<dbReference type="NCBIfam" id="NF002132">
    <property type="entry name" value="PRK00971.1-1"/>
    <property type="match status" value="1"/>
</dbReference>
<dbReference type="NCBIfam" id="NF002133">
    <property type="entry name" value="PRK00971.1-2"/>
    <property type="match status" value="1"/>
</dbReference>
<dbReference type="PANTHER" id="PTHR12544">
    <property type="entry name" value="GLUTAMINASE"/>
    <property type="match status" value="1"/>
</dbReference>
<dbReference type="PANTHER" id="PTHR12544:SF29">
    <property type="entry name" value="GLUTAMINASE"/>
    <property type="match status" value="1"/>
</dbReference>
<dbReference type="Pfam" id="PF04960">
    <property type="entry name" value="Glutaminase"/>
    <property type="match status" value="1"/>
</dbReference>
<dbReference type="SUPFAM" id="SSF56601">
    <property type="entry name" value="beta-lactamase/transpeptidase-like"/>
    <property type="match status" value="1"/>
</dbReference>
<organism>
    <name type="scientific">Pseudomonas savastanoi pv. phaseolicola (strain 1448A / Race 6)</name>
    <name type="common">Pseudomonas syringae pv. phaseolicola (strain 1448A / Race 6)</name>
    <dbReference type="NCBI Taxonomy" id="264730"/>
    <lineage>
        <taxon>Bacteria</taxon>
        <taxon>Pseudomonadati</taxon>
        <taxon>Pseudomonadota</taxon>
        <taxon>Gammaproteobacteria</taxon>
        <taxon>Pseudomonadales</taxon>
        <taxon>Pseudomonadaceae</taxon>
        <taxon>Pseudomonas</taxon>
    </lineage>
</organism>